<gene>
    <name type="primary">clp1</name>
    <name type="synonym">flp1</name>
    <name type="ORF">SPAC1782.09c</name>
</gene>
<feature type="chain" id="PRO_0000094874" description="Tyrosine-protein phosphatase CDC14 homolog">
    <location>
        <begin position="1"/>
        <end position="537"/>
    </location>
</feature>
<feature type="domain" description="Tyrosine-protein phosphatase" evidence="1">
    <location>
        <begin position="182"/>
        <end position="345"/>
    </location>
</feature>
<feature type="region of interest" description="Disordered" evidence="3">
    <location>
        <begin position="359"/>
        <end position="537"/>
    </location>
</feature>
<feature type="compositionally biased region" description="Polar residues" evidence="3">
    <location>
        <begin position="370"/>
        <end position="382"/>
    </location>
</feature>
<feature type="compositionally biased region" description="Low complexity" evidence="3">
    <location>
        <begin position="400"/>
        <end position="411"/>
    </location>
</feature>
<feature type="compositionally biased region" description="Polar residues" evidence="3">
    <location>
        <begin position="421"/>
        <end position="437"/>
    </location>
</feature>
<feature type="compositionally biased region" description="Low complexity" evidence="3">
    <location>
        <begin position="490"/>
        <end position="502"/>
    </location>
</feature>
<feature type="compositionally biased region" description="Polar residues" evidence="3">
    <location>
        <begin position="514"/>
        <end position="523"/>
    </location>
</feature>
<feature type="compositionally biased region" description="Basic residues" evidence="3">
    <location>
        <begin position="526"/>
        <end position="537"/>
    </location>
</feature>
<feature type="active site" description="Phosphocysteine intermediate" evidence="1">
    <location>
        <position position="286"/>
    </location>
</feature>
<feature type="modified residue" description="Phosphothreonine" evidence="12">
    <location>
        <position position="453"/>
    </location>
</feature>
<feature type="modified residue" description="Phosphoserine" evidence="12">
    <location>
        <position position="468"/>
    </location>
</feature>
<feature type="modified residue" description="Phosphoserine" evidence="12">
    <location>
        <position position="470"/>
    </location>
</feature>
<feature type="modified residue" description="Phosphoserine" evidence="12">
    <location>
        <position position="513"/>
    </location>
</feature>
<feature type="mutagenesis site" description="Inactivates phosphatase activity." evidence="11">
    <original>C</original>
    <variation>A</variation>
    <location>
        <position position="286"/>
    </location>
</feature>
<dbReference type="EC" id="3.1.3.48"/>
<dbReference type="EMBL" id="CU329670">
    <property type="protein sequence ID" value="CAB76271.1"/>
    <property type="molecule type" value="Genomic_DNA"/>
</dbReference>
<dbReference type="PIR" id="T50099">
    <property type="entry name" value="T50099"/>
</dbReference>
<dbReference type="RefSeq" id="NP_594716.1">
    <property type="nucleotide sequence ID" value="NM_001020143.2"/>
</dbReference>
<dbReference type="SMR" id="Q9P7H1"/>
<dbReference type="BioGRID" id="278823">
    <property type="interactions" value="256"/>
</dbReference>
<dbReference type="FunCoup" id="Q9P7H1">
    <property type="interactions" value="186"/>
</dbReference>
<dbReference type="IntAct" id="Q9P7H1">
    <property type="interactions" value="4"/>
</dbReference>
<dbReference type="STRING" id="284812.Q9P7H1"/>
<dbReference type="iPTMnet" id="Q9P7H1"/>
<dbReference type="PaxDb" id="4896-SPAC1782.09c.1"/>
<dbReference type="EnsemblFungi" id="SPAC1782.09c.1">
    <property type="protein sequence ID" value="SPAC1782.09c.1:pep"/>
    <property type="gene ID" value="SPAC1782.09c"/>
</dbReference>
<dbReference type="GeneID" id="2542358"/>
<dbReference type="KEGG" id="spo:2542358"/>
<dbReference type="PomBase" id="SPAC1782.09c">
    <property type="gene designation" value="clp1"/>
</dbReference>
<dbReference type="VEuPathDB" id="FungiDB:SPAC1782.09c"/>
<dbReference type="eggNOG" id="KOG1720">
    <property type="taxonomic scope" value="Eukaryota"/>
</dbReference>
<dbReference type="HOGENOM" id="CLU_017787_1_2_1"/>
<dbReference type="InParanoid" id="Q9P7H1"/>
<dbReference type="OMA" id="RIMRPGM"/>
<dbReference type="PhylomeDB" id="Q9P7H1"/>
<dbReference type="Reactome" id="R-SPO-176407">
    <property type="pathway name" value="Conversion from APC/C:Cdc20 to APC/C:Cdh1 in late anaphase"/>
</dbReference>
<dbReference type="Reactome" id="R-SPO-5687128">
    <property type="pathway name" value="MAPK6/MAPK4 signaling"/>
</dbReference>
<dbReference type="CD-CODE" id="576F0A76">
    <property type="entry name" value="Centrosome"/>
</dbReference>
<dbReference type="PRO" id="PR:Q9P7H1"/>
<dbReference type="Proteomes" id="UP000002485">
    <property type="component" value="Chromosome I"/>
</dbReference>
<dbReference type="GO" id="GO:0032153">
    <property type="term" value="C:cell division site"/>
    <property type="evidence" value="ECO:0000314"/>
    <property type="project" value="PomBase"/>
</dbReference>
<dbReference type="GO" id="GO:0005737">
    <property type="term" value="C:cytoplasm"/>
    <property type="evidence" value="ECO:0000318"/>
    <property type="project" value="GO_Central"/>
</dbReference>
<dbReference type="GO" id="GO:0000776">
    <property type="term" value="C:kinetochore"/>
    <property type="evidence" value="ECO:0000314"/>
    <property type="project" value="PomBase"/>
</dbReference>
<dbReference type="GO" id="GO:0110085">
    <property type="term" value="C:mitotic actomyosin contractile ring"/>
    <property type="evidence" value="ECO:0000314"/>
    <property type="project" value="PomBase"/>
</dbReference>
<dbReference type="GO" id="GO:0120105">
    <property type="term" value="C:mitotic actomyosin contractile ring, intermediate layer"/>
    <property type="evidence" value="ECO:0000314"/>
    <property type="project" value="PomBase"/>
</dbReference>
<dbReference type="GO" id="GO:0072686">
    <property type="term" value="C:mitotic spindle"/>
    <property type="evidence" value="ECO:0000314"/>
    <property type="project" value="PomBase"/>
</dbReference>
<dbReference type="GO" id="GO:1990023">
    <property type="term" value="C:mitotic spindle midzone"/>
    <property type="evidence" value="ECO:0000314"/>
    <property type="project" value="PomBase"/>
</dbReference>
<dbReference type="GO" id="GO:0044732">
    <property type="term" value="C:mitotic spindle pole body"/>
    <property type="evidence" value="ECO:0000314"/>
    <property type="project" value="PomBase"/>
</dbReference>
<dbReference type="GO" id="GO:0140602">
    <property type="term" value="C:nucleolar peripheral inclusion body"/>
    <property type="evidence" value="ECO:0000314"/>
    <property type="project" value="PomBase"/>
</dbReference>
<dbReference type="GO" id="GO:0005730">
    <property type="term" value="C:nucleolus"/>
    <property type="evidence" value="ECO:0000314"/>
    <property type="project" value="PomBase"/>
</dbReference>
<dbReference type="GO" id="GO:0005654">
    <property type="term" value="C:nucleoplasm"/>
    <property type="evidence" value="ECO:0000314"/>
    <property type="project" value="PomBase"/>
</dbReference>
<dbReference type="GO" id="GO:0005634">
    <property type="term" value="C:nucleus"/>
    <property type="evidence" value="ECO:0007005"/>
    <property type="project" value="PomBase"/>
</dbReference>
<dbReference type="GO" id="GO:0000922">
    <property type="term" value="C:spindle pole"/>
    <property type="evidence" value="ECO:0000318"/>
    <property type="project" value="GO_Central"/>
</dbReference>
<dbReference type="GO" id="GO:0005816">
    <property type="term" value="C:spindle pole body"/>
    <property type="evidence" value="ECO:0000318"/>
    <property type="project" value="GO_Central"/>
</dbReference>
<dbReference type="GO" id="GO:0004721">
    <property type="term" value="F:phosphoprotein phosphatase activity"/>
    <property type="evidence" value="ECO:0000314"/>
    <property type="project" value="PomBase"/>
</dbReference>
<dbReference type="GO" id="GO:0004722">
    <property type="term" value="F:protein serine/threonine phosphatase activity"/>
    <property type="evidence" value="ECO:0000314"/>
    <property type="project" value="PomBase"/>
</dbReference>
<dbReference type="GO" id="GO:0004725">
    <property type="term" value="F:protein tyrosine phosphatase activity"/>
    <property type="evidence" value="ECO:0000318"/>
    <property type="project" value="GO_Central"/>
</dbReference>
<dbReference type="GO" id="GO:0000917">
    <property type="term" value="P:division septum assembly"/>
    <property type="evidence" value="ECO:0007669"/>
    <property type="project" value="UniProtKB-KW"/>
</dbReference>
<dbReference type="GO" id="GO:0006974">
    <property type="term" value="P:DNA damage response"/>
    <property type="evidence" value="ECO:0000315"/>
    <property type="project" value="PomBase"/>
</dbReference>
<dbReference type="GO" id="GO:0051321">
    <property type="term" value="P:meiotic cell cycle"/>
    <property type="evidence" value="ECO:0007669"/>
    <property type="project" value="UniProtKB-KW"/>
</dbReference>
<dbReference type="GO" id="GO:0000226">
    <property type="term" value="P:microtubule cytoskeleton organization"/>
    <property type="evidence" value="ECO:0000318"/>
    <property type="project" value="GO_Central"/>
</dbReference>
<dbReference type="GO" id="GO:0044878">
    <property type="term" value="P:mitotic cytokinesis checkpoint signaling"/>
    <property type="evidence" value="ECO:0000315"/>
    <property type="project" value="PomBase"/>
</dbReference>
<dbReference type="GO" id="GO:0010972">
    <property type="term" value="P:negative regulation of G2/M transition of mitotic cell cycle"/>
    <property type="evidence" value="ECO:0000315"/>
    <property type="project" value="PomBase"/>
</dbReference>
<dbReference type="GO" id="GO:0032467">
    <property type="term" value="P:positive regulation of cytokinesis"/>
    <property type="evidence" value="ECO:0000318"/>
    <property type="project" value="GO_Central"/>
</dbReference>
<dbReference type="GO" id="GO:0031536">
    <property type="term" value="P:positive regulation of exit from mitosis"/>
    <property type="evidence" value="ECO:0000315"/>
    <property type="project" value="PomBase"/>
</dbReference>
<dbReference type="GO" id="GO:1903501">
    <property type="term" value="P:positive regulation of mitotic actomyosin contractile ring assembly"/>
    <property type="evidence" value="ECO:0000269"/>
    <property type="project" value="PomBase"/>
</dbReference>
<dbReference type="GO" id="GO:1903490">
    <property type="term" value="P:positive regulation of mitotic cytokinesis"/>
    <property type="evidence" value="ECO:0000315"/>
    <property type="project" value="PomBase"/>
</dbReference>
<dbReference type="GO" id="GO:0140429">
    <property type="term" value="P:positive regulation of mitotic sister chromatid biorientation"/>
    <property type="evidence" value="ECO:0000315"/>
    <property type="project" value="PomBase"/>
</dbReference>
<dbReference type="GO" id="GO:1902846">
    <property type="term" value="P:positive regulation of mitotic spindle elongation"/>
    <property type="evidence" value="ECO:0000315"/>
    <property type="project" value="PomBase"/>
</dbReference>
<dbReference type="GO" id="GO:0031031">
    <property type="term" value="P:positive regulation of septation initiation signaling"/>
    <property type="evidence" value="ECO:0000316"/>
    <property type="project" value="PomBase"/>
</dbReference>
<dbReference type="GO" id="GO:1902440">
    <property type="term" value="P:protein localization to mitotic spindle pole body"/>
    <property type="evidence" value="ECO:0000315"/>
    <property type="project" value="PomBase"/>
</dbReference>
<dbReference type="GO" id="GO:0007096">
    <property type="term" value="P:regulation of exit from mitosis"/>
    <property type="evidence" value="ECO:0000318"/>
    <property type="project" value="GO_Central"/>
</dbReference>
<dbReference type="GO" id="GO:1902412">
    <property type="term" value="P:regulation of mitotic cytokinesis"/>
    <property type="evidence" value="ECO:0000316"/>
    <property type="project" value="PomBase"/>
</dbReference>
<dbReference type="GO" id="GO:0072479">
    <property type="term" value="P:response to mitotic cell cycle spindle assembly checkpoint signaling"/>
    <property type="evidence" value="ECO:0000315"/>
    <property type="project" value="PomBase"/>
</dbReference>
<dbReference type="CDD" id="cd14499">
    <property type="entry name" value="CDC14_C"/>
    <property type="match status" value="1"/>
</dbReference>
<dbReference type="CDD" id="cd17657">
    <property type="entry name" value="CDC14_N"/>
    <property type="match status" value="1"/>
</dbReference>
<dbReference type="FunFam" id="3.90.190.10:FF:000038">
    <property type="entry name" value="Tyrosine-protein phosphatase CDC14"/>
    <property type="match status" value="1"/>
</dbReference>
<dbReference type="Gene3D" id="3.90.190.10">
    <property type="entry name" value="Protein tyrosine phosphatase superfamily"/>
    <property type="match status" value="2"/>
</dbReference>
<dbReference type="InterPro" id="IPR044506">
    <property type="entry name" value="CDC14_C"/>
</dbReference>
<dbReference type="InterPro" id="IPR029260">
    <property type="entry name" value="DSPn"/>
</dbReference>
<dbReference type="InterPro" id="IPR000340">
    <property type="entry name" value="Dual-sp_phosphatase_cat-dom"/>
</dbReference>
<dbReference type="InterPro" id="IPR029021">
    <property type="entry name" value="Prot-tyrosine_phosphatase-like"/>
</dbReference>
<dbReference type="InterPro" id="IPR050561">
    <property type="entry name" value="PTP"/>
</dbReference>
<dbReference type="InterPro" id="IPR016130">
    <property type="entry name" value="Tyr_Pase_AS"/>
</dbReference>
<dbReference type="InterPro" id="IPR003595">
    <property type="entry name" value="Tyr_Pase_cat"/>
</dbReference>
<dbReference type="InterPro" id="IPR000387">
    <property type="entry name" value="Tyr_Pase_dom"/>
</dbReference>
<dbReference type="InterPro" id="IPR020422">
    <property type="entry name" value="TYR_PHOSPHATASE_DUAL_dom"/>
</dbReference>
<dbReference type="PANTHER" id="PTHR23339">
    <property type="entry name" value="TYROSINE SPECIFIC PROTEIN PHOSPHATASE AND DUAL SPECIFICITY PROTEIN PHOSPHATASE"/>
    <property type="match status" value="1"/>
</dbReference>
<dbReference type="Pfam" id="PF00782">
    <property type="entry name" value="DSPc"/>
    <property type="match status" value="1"/>
</dbReference>
<dbReference type="Pfam" id="PF14671">
    <property type="entry name" value="DSPn"/>
    <property type="match status" value="1"/>
</dbReference>
<dbReference type="SMART" id="SM00195">
    <property type="entry name" value="DSPc"/>
    <property type="match status" value="1"/>
</dbReference>
<dbReference type="SMART" id="SM00404">
    <property type="entry name" value="PTPc_motif"/>
    <property type="match status" value="1"/>
</dbReference>
<dbReference type="SUPFAM" id="SSF52799">
    <property type="entry name" value="(Phosphotyrosine protein) phosphatases II"/>
    <property type="match status" value="2"/>
</dbReference>
<dbReference type="PROSITE" id="PS00383">
    <property type="entry name" value="TYR_PHOSPHATASE_1"/>
    <property type="match status" value="1"/>
</dbReference>
<dbReference type="PROSITE" id="PS50056">
    <property type="entry name" value="TYR_PHOSPHATASE_2"/>
    <property type="match status" value="1"/>
</dbReference>
<dbReference type="PROSITE" id="PS50054">
    <property type="entry name" value="TYR_PHOSPHATASE_DUAL"/>
    <property type="match status" value="1"/>
</dbReference>
<accession>Q9P7H1</accession>
<keyword id="KW-0131">Cell cycle</keyword>
<keyword id="KW-0132">Cell division</keyword>
<keyword id="KW-0963">Cytoplasm</keyword>
<keyword id="KW-0206">Cytoskeleton</keyword>
<keyword id="KW-0378">Hydrolase</keyword>
<keyword id="KW-0469">Meiosis</keyword>
<keyword id="KW-0498">Mitosis</keyword>
<keyword id="KW-0539">Nucleus</keyword>
<keyword id="KW-0597">Phosphoprotein</keyword>
<keyword id="KW-0904">Protein phosphatase</keyword>
<keyword id="KW-1185">Reference proteome</keyword>
<keyword id="KW-0717">Septation</keyword>
<comment type="function">
    <text evidence="4 5 6 7 8 10 11 13 14 15 16">Protein phosphatase which antagonizes mitotic cyclin-dependent kinase cdc2, the inactivation of which is essential for exit from mitosis. To access its substrates, is released from nucleolar sequestration during mitosis. Plays an essential in coordinating the nuclear division cycle with cytokinesis through the cytokinesis checkpoint. Involved in chromosome segregation, where it is required for meiosis I spindle dissambly as well as for establishing two consecutive chromosome segregation phases. Allows damaged actomyosin rings to be maintained to facilitate completion of cell division in response to minor perturbation of the cell division machinery. Dephosphorylates the mitotic inducer cdc25 for its rapid degradation. Down-regulation of cdc25 activity ensures a prompt inactivation of mitotic cdc2 complexes to trigger cell division. Also dephosphorylates cdc2-phosphorylated nsk1, allowing nsk1-binding to kinetochores and spindle. Dephosphorylates ase1, which is essential for spindle midzone assembly and for continuous extension of the anaphase spindle. Tethered to the contractile ring by mid1, where it dephosphorylates cdc15.</text>
</comment>
<comment type="catalytic activity">
    <reaction evidence="2">
        <text>O-phospho-L-tyrosyl-[protein] + H2O = L-tyrosyl-[protein] + phosphate</text>
        <dbReference type="Rhea" id="RHEA:10684"/>
        <dbReference type="Rhea" id="RHEA-COMP:10136"/>
        <dbReference type="Rhea" id="RHEA-COMP:20101"/>
        <dbReference type="ChEBI" id="CHEBI:15377"/>
        <dbReference type="ChEBI" id="CHEBI:43474"/>
        <dbReference type="ChEBI" id="CHEBI:46858"/>
        <dbReference type="ChEBI" id="CHEBI:61978"/>
        <dbReference type="EC" id="3.1.3.48"/>
    </reaction>
</comment>
<comment type="subunit">
    <text evidence="6 8 9 13 14">Interacts with ark1 at the kinetochores. Interacts with bir1, cdc25, mid1, nbl1, pic1, and rad24.</text>
</comment>
<comment type="interaction">
    <interactant intactId="EBI-704737">
        <id>Q9P7H1</id>
    </interactant>
    <interactant intactId="EBI-704791">
        <id>P42656</id>
        <label>rad24</label>
    </interactant>
    <organismsDiffer>false</organismsDiffer>
    <experiments>3</experiments>
</comment>
<comment type="subcellular location">
    <subcellularLocation>
        <location>Nucleus</location>
        <location>Nucleolus</location>
    </subcellularLocation>
    <subcellularLocation>
        <location>Cytoplasm</location>
        <location>Cytoskeleton</location>
        <location>Microtubule organizing center</location>
        <location>Spindle pole body</location>
    </subcellularLocation>
    <text>Localizes to kinetochores in prometaphase. Cytoplasmic retention is mediated through the binding of rad24. Tethered to the contractile ring by mid1.</text>
</comment>
<comment type="PTM">
    <text evidence="5 12 17">Phosphorylated by cds1, chk1, pmk1, and cdc2 upon Hydroxylurea and H(2)O(2) stress treatment. Phosphorylation regulates the nucleolar-to-nucleoplasmic transition. Is able to autodephosphorylate.</text>
</comment>
<comment type="similarity">
    <text evidence="18">Belongs to the protein-tyrosine phosphatase family. Non-receptor class CDC14 subfamily.</text>
</comment>
<protein>
    <recommendedName>
        <fullName>Tyrosine-protein phosphatase CDC14 homolog</fullName>
        <ecNumber>3.1.3.48</ecNumber>
    </recommendedName>
    <alternativeName>
        <fullName>CDC fourteen-like phosphatase 1</fullName>
    </alternativeName>
</protein>
<organism>
    <name type="scientific">Schizosaccharomyces pombe (strain 972 / ATCC 24843)</name>
    <name type="common">Fission yeast</name>
    <dbReference type="NCBI Taxonomy" id="284812"/>
    <lineage>
        <taxon>Eukaryota</taxon>
        <taxon>Fungi</taxon>
        <taxon>Dikarya</taxon>
        <taxon>Ascomycota</taxon>
        <taxon>Taphrinomycotina</taxon>
        <taxon>Schizosaccharomycetes</taxon>
        <taxon>Schizosaccharomycetales</taxon>
        <taxon>Schizosaccharomycetaceae</taxon>
        <taxon>Schizosaccharomyces</taxon>
    </lineage>
</organism>
<evidence type="ECO:0000255" key="1">
    <source>
        <dbReference type="PROSITE-ProRule" id="PRU00160"/>
    </source>
</evidence>
<evidence type="ECO:0000255" key="2">
    <source>
        <dbReference type="PROSITE-ProRule" id="PRU10044"/>
    </source>
</evidence>
<evidence type="ECO:0000256" key="3">
    <source>
        <dbReference type="SAM" id="MobiDB-lite"/>
    </source>
</evidence>
<evidence type="ECO:0000269" key="4">
    <source>
    </source>
</evidence>
<evidence type="ECO:0000269" key="5">
    <source>
    </source>
</evidence>
<evidence type="ECO:0000269" key="6">
    <source>
    </source>
</evidence>
<evidence type="ECO:0000269" key="7">
    <source>
    </source>
</evidence>
<evidence type="ECO:0000269" key="8">
    <source>
    </source>
</evidence>
<evidence type="ECO:0000269" key="9">
    <source>
    </source>
</evidence>
<evidence type="ECO:0000269" key="10">
    <source>
    </source>
</evidence>
<evidence type="ECO:0000269" key="11">
    <source>
    </source>
</evidence>
<evidence type="ECO:0000269" key="12">
    <source>
    </source>
</evidence>
<evidence type="ECO:0000269" key="13">
    <source>
    </source>
</evidence>
<evidence type="ECO:0000269" key="14">
    <source>
    </source>
</evidence>
<evidence type="ECO:0000269" key="15">
    <source>
    </source>
</evidence>
<evidence type="ECO:0000269" key="16">
    <source>
    </source>
</evidence>
<evidence type="ECO:0000269" key="17">
    <source>
    </source>
</evidence>
<evidence type="ECO:0000305" key="18"/>
<sequence length="537" mass="60253">MDYQDDGLGEMIEFLEDKLYYTSLSQPPKAELYPHMHFFTIDDELIYNPFYHDFGPLNVSHLIRFAVIVHGIMGKHRQAKKSKAIVLYSSTDTRLRANAACLLACYMVLVQNWPPHLALAPLAQAEPPFLGFRDAGYAVSDYYITIQDCVYGLWRARESSILNIRNIDVHDYETYERVENGDFNWISPKFIAFASPIQAGWNHASTRPKKLPQPFAIVLDYFVANKVKLIVRLNGPLYDKKTFENVGIRHKEMYFEDGTVPELSLVKEFIDLTEEVEEDGVIAVHCKAGLGRTGCLIGAYLIYKHCFTANEVIAYMRIMRPGMVVGPQQHWLHINQVHFRAYFYEKAMGRAIQQATAAEPLATPPRHPLNATNGTSQSNISTPLPEPTPGQPRKVSGHNPPSARRLPSASSVKFNEKLKNASKQSIQNENKASYSSYEDSEIQNDDETRTVGTPTETISVVRLRRSSSQSNIEPNGVRSPTSSPTGSPIRRTSGNRWSSGSSHSKKSAQRSVSMSSLNNTSNGRVAKPKPSKSRLIS</sequence>
<name>FLP1_SCHPO</name>
<reference key="1">
    <citation type="journal article" date="2002" name="Nature">
        <title>The genome sequence of Schizosaccharomyces pombe.</title>
        <authorList>
            <person name="Wood V."/>
            <person name="Gwilliam R."/>
            <person name="Rajandream M.A."/>
            <person name="Lyne M.H."/>
            <person name="Lyne R."/>
            <person name="Stewart A."/>
            <person name="Sgouros J.G."/>
            <person name="Peat N."/>
            <person name="Hayles J."/>
            <person name="Baker S.G."/>
            <person name="Basham D."/>
            <person name="Bowman S."/>
            <person name="Brooks K."/>
            <person name="Brown D."/>
            <person name="Brown S."/>
            <person name="Chillingworth T."/>
            <person name="Churcher C.M."/>
            <person name="Collins M."/>
            <person name="Connor R."/>
            <person name="Cronin A."/>
            <person name="Davis P."/>
            <person name="Feltwell T."/>
            <person name="Fraser A."/>
            <person name="Gentles S."/>
            <person name="Goble A."/>
            <person name="Hamlin N."/>
            <person name="Harris D.E."/>
            <person name="Hidalgo J."/>
            <person name="Hodgson G."/>
            <person name="Holroyd S."/>
            <person name="Hornsby T."/>
            <person name="Howarth S."/>
            <person name="Huckle E.J."/>
            <person name="Hunt S."/>
            <person name="Jagels K."/>
            <person name="James K.D."/>
            <person name="Jones L."/>
            <person name="Jones M."/>
            <person name="Leather S."/>
            <person name="McDonald S."/>
            <person name="McLean J."/>
            <person name="Mooney P."/>
            <person name="Moule S."/>
            <person name="Mungall K.L."/>
            <person name="Murphy L.D."/>
            <person name="Niblett D."/>
            <person name="Odell C."/>
            <person name="Oliver K."/>
            <person name="O'Neil S."/>
            <person name="Pearson D."/>
            <person name="Quail M.A."/>
            <person name="Rabbinowitsch E."/>
            <person name="Rutherford K.M."/>
            <person name="Rutter S."/>
            <person name="Saunders D."/>
            <person name="Seeger K."/>
            <person name="Sharp S."/>
            <person name="Skelton J."/>
            <person name="Simmonds M.N."/>
            <person name="Squares R."/>
            <person name="Squares S."/>
            <person name="Stevens K."/>
            <person name="Taylor K."/>
            <person name="Taylor R.G."/>
            <person name="Tivey A."/>
            <person name="Walsh S.V."/>
            <person name="Warren T."/>
            <person name="Whitehead S."/>
            <person name="Woodward J.R."/>
            <person name="Volckaert G."/>
            <person name="Aert R."/>
            <person name="Robben J."/>
            <person name="Grymonprez B."/>
            <person name="Weltjens I."/>
            <person name="Vanstreels E."/>
            <person name="Rieger M."/>
            <person name="Schaefer M."/>
            <person name="Mueller-Auer S."/>
            <person name="Gabel C."/>
            <person name="Fuchs M."/>
            <person name="Duesterhoeft A."/>
            <person name="Fritzc C."/>
            <person name="Holzer E."/>
            <person name="Moestl D."/>
            <person name="Hilbert H."/>
            <person name="Borzym K."/>
            <person name="Langer I."/>
            <person name="Beck A."/>
            <person name="Lehrach H."/>
            <person name="Reinhardt R."/>
            <person name="Pohl T.M."/>
            <person name="Eger P."/>
            <person name="Zimmermann W."/>
            <person name="Wedler H."/>
            <person name="Wambutt R."/>
            <person name="Purnelle B."/>
            <person name="Goffeau A."/>
            <person name="Cadieu E."/>
            <person name="Dreano S."/>
            <person name="Gloux S."/>
            <person name="Lelaure V."/>
            <person name="Mottier S."/>
            <person name="Galibert F."/>
            <person name="Aves S.J."/>
            <person name="Xiang Z."/>
            <person name="Hunt C."/>
            <person name="Moore K."/>
            <person name="Hurst S.M."/>
            <person name="Lucas M."/>
            <person name="Rochet M."/>
            <person name="Gaillardin C."/>
            <person name="Tallada V.A."/>
            <person name="Garzon A."/>
            <person name="Thode G."/>
            <person name="Daga R.R."/>
            <person name="Cruzado L."/>
            <person name="Jimenez J."/>
            <person name="Sanchez M."/>
            <person name="del Rey F."/>
            <person name="Benito J."/>
            <person name="Dominguez A."/>
            <person name="Revuelta J.L."/>
            <person name="Moreno S."/>
            <person name="Armstrong J."/>
            <person name="Forsburg S.L."/>
            <person name="Cerutti L."/>
            <person name="Lowe T."/>
            <person name="McCombie W.R."/>
            <person name="Paulsen I."/>
            <person name="Potashkin J."/>
            <person name="Shpakovski G.V."/>
            <person name="Ussery D."/>
            <person name="Barrell B.G."/>
            <person name="Nurse P."/>
        </authorList>
    </citation>
    <scope>NUCLEOTIDE SEQUENCE [LARGE SCALE GENOMIC DNA]</scope>
    <source>
        <strain>972 / ATCC 24843</strain>
    </source>
</reference>
<reference key="2">
    <citation type="journal article" date="2001" name="Curr. Biol.">
        <title>Fission yeast Clp1p phosphatase regulates G2/M transition and coordination of cytokinesis with cell cycle progression.</title>
        <authorList>
            <person name="Trautmann S."/>
            <person name="Wolfe B.A."/>
            <person name="Jorgensen P."/>
            <person name="Tyers M."/>
            <person name="Gould K.L."/>
            <person name="McCollum D."/>
        </authorList>
    </citation>
    <scope>FUNCTION</scope>
    <scope>SUBCELLULAR LOCATION</scope>
</reference>
<reference key="3">
    <citation type="journal article" date="2001" name="J. Cell Sci.">
        <title>Flp1, a fission yeast orthologue of the s. cerevisiae CDC14 gene, is not required for cyclin degradation or rum1p stabilisation at the end of mitosis.</title>
        <authorList>
            <person name="Cueille N."/>
            <person name="Salimova E."/>
            <person name="Esteban V."/>
            <person name="Blanco M."/>
            <person name="Moreno S."/>
            <person name="Bueno A."/>
            <person name="Simanis V."/>
        </authorList>
    </citation>
    <scope>FUNCTION</scope>
    <scope>SUBCELLULAR LOCATION</scope>
    <scope>PHOSPHORYLATION</scope>
</reference>
<reference key="4">
    <citation type="journal article" date="2004" name="Dev. Cell">
        <title>The S. pombe Cdc14-like phosphatase Clp1p regulates chromosome biorientation and interacts with Aurora kinase.</title>
        <authorList>
            <person name="Trautmann S."/>
            <person name="Rajagopalan S."/>
            <person name="McCollum D."/>
        </authorList>
    </citation>
    <scope>FUNCTION</scope>
    <scope>SUBCELLULAR LOCATION</scope>
    <scope>INTERACTION WITH ARK1</scope>
</reference>
<reference key="5">
    <citation type="journal article" date="2004" name="J. Cell Sci.">
        <title>A role for the Cdc14-family phosphatase Flp1p at the end of the cell cycle in controlling the rapid degradation of the mitotic inducer Cdc25p in fission yeast.</title>
        <authorList>
            <person name="Esteban V."/>
            <person name="Blanco M."/>
            <person name="Cueille N."/>
            <person name="Simanis V."/>
            <person name="Moreno S."/>
            <person name="Bueno A."/>
        </authorList>
    </citation>
    <scope>FUNCTION IN DEPHOSPHORYLATION OF CDC25</scope>
    <scope>INTERACTION WITH CDC25</scope>
</reference>
<reference key="6">
    <citation type="journal article" date="2004" name="J. Cell Sci.">
        <title>The Clp1p/Flp1p phosphatase ensures completion of cytokinesis in response to minor perturbation of the cell division machinery in Schizosaccharomyces pombe.</title>
        <authorList>
            <person name="Mishra M."/>
            <person name="Karagiannis J."/>
            <person name="Trautmann S."/>
            <person name="Wang H."/>
            <person name="McCollum D."/>
            <person name="Balasubramanian M.K."/>
        </authorList>
    </citation>
    <scope>FUNCTION</scope>
</reference>
<reference key="7">
    <citation type="journal article" date="2005" name="Curr. Biol.">
        <title>The 14-3-3 protein rad24p modulates function of the cdc14p family phosphatase clp1p/flp1p in fission yeast.</title>
        <authorList>
            <person name="Mishra M."/>
            <person name="Karagiannis J."/>
            <person name="Sevugan M."/>
            <person name="Singh P."/>
            <person name="Balasubramanian M.K."/>
        </authorList>
    </citation>
    <scope>INTERACTION WITH RAD24</scope>
    <scope>SUBCELLULAR LOCATION</scope>
</reference>
<reference key="8">
    <citation type="journal article" date="2005" name="Curr. Biol.">
        <title>Distinct nuclear and cytoplasmic functions of the S. pombe Cdc14-like phosphatase Clp1p/Flp1p and a role for nuclear shuttling in its regulation.</title>
        <authorList>
            <person name="Trautmann S."/>
            <person name="McCollum D."/>
        </authorList>
    </citation>
    <scope>FUNCTION</scope>
    <scope>SUBCELLULAR LOCATION</scope>
</reference>
<reference key="9">
    <citation type="journal article" date="2008" name="J. Proteome Res.">
        <title>Phosphoproteome analysis of fission yeast.</title>
        <authorList>
            <person name="Wilson-Grady J.T."/>
            <person name="Villen J."/>
            <person name="Gygi S.P."/>
        </authorList>
    </citation>
    <scope>PHOSPHORYLATION [LARGE SCALE ANALYSIS] AT THR-453; SER-468; SER-470 AND SER-513</scope>
    <scope>IDENTIFICATION BY MASS SPECTROMETRY</scope>
</reference>
<reference key="10">
    <citation type="journal article" date="2007" name="J. Cell Biol.">
        <title>Cdc14-regulated midzone assembly controls anaphase B.</title>
        <authorList>
            <person name="Khmelinskii A."/>
            <person name="Lawrence C."/>
            <person name="Roostalu J."/>
            <person name="Schiebel E."/>
        </authorList>
    </citation>
    <scope>FUNCTION IN DEPHOSPHORYLATION OF ASE1</scope>
    <scope>MUTAGENESIS OF CYS-286</scope>
</reference>
<reference key="11">
    <citation type="journal article" date="2008" name="J. Cell Biol.">
        <title>The Clp1/Cdc14 phosphatase contributes to the robustness of cytokinesis by association with anillin-related Mid1.</title>
        <authorList>
            <person name="Clifford D.M."/>
            <person name="Wolfe B.A."/>
            <person name="Roberts-Galbraith R.H."/>
            <person name="McDonald W.H."/>
            <person name="Yates J.R. III"/>
            <person name="Gould K.L."/>
        </authorList>
    </citation>
    <scope>INTERACTION WITH MID1</scope>
    <scope>SUBCELLULAR LOCATION</scope>
    <scope>FUNCTION IN DEPHOSPHORYLATION OF CDC15</scope>
</reference>
<reference key="12">
    <citation type="journal article" date="2009" name="Mol. Biol. Cell">
        <title>A link between aurora kinase and Clp1/Cdc14 regulation uncovered by the identification of a fission yeast borealin-like protein.</title>
        <authorList>
            <person name="Bohnert K.A."/>
            <person name="Chen J.S."/>
            <person name="Clifford D.M."/>
            <person name="Vander Kooi C.W."/>
            <person name="Gould K.L."/>
        </authorList>
    </citation>
    <scope>INTERACTION WITH BIR1; NBL1 AND PIC1</scope>
    <scope>FUNCTION</scope>
    <scope>SUBCELLULAR LOCATION</scope>
</reference>
<reference key="13">
    <citation type="journal article" date="2011" name="J. Cell Biol.">
        <title>Cdk1 phosphorylation of the kinetochore protein Nsk1 prevents error-prone chromosome segregation.</title>
        <authorList>
            <person name="Chen J.S."/>
            <person name="Lu L.X."/>
            <person name="Ohi M.D."/>
            <person name="Creamer K.M."/>
            <person name="English C."/>
            <person name="Partridge J.F."/>
            <person name="Ohi R."/>
            <person name="Gould K.L."/>
        </authorList>
    </citation>
    <scope>FUNCTION IN DEPHOSPHORYLATION OF NSK1</scope>
</reference>
<reference key="14">
    <citation type="journal article" date="2012" name="Genome Biol.">
        <title>A systematic screen reveals new elements acting at the G2/M cell cycle control.</title>
        <authorList>
            <person name="Navarro F.J."/>
            <person name="Nurse P."/>
        </authorList>
    </citation>
    <scope>FUNCTION</scope>
</reference>
<reference key="15">
    <citation type="journal article" date="2012" name="Mol. Biol. Cell">
        <title>Multiple protein kinases influence the redistribution of fission yeast Clp1/Cdc14 phosphatase upon genotoxic stress.</title>
        <authorList>
            <person name="Broadus M.R."/>
            <person name="Gould K.L."/>
        </authorList>
    </citation>
    <scope>PHOSPHORYLATION</scope>
    <scope>SUBCELLULAR LOCATION</scope>
</reference>
<proteinExistence type="evidence at protein level"/>